<name>EIF3E_ASPFC</name>
<sequence>MAANVSPSAETLSSGAAAHPSNTAEEIANQYNLLPKLIPYLDRHLVFPLLEFSSGQDDEKEIVRAKYELLKHTNMTDYVANLWKEINNSDDIPDEFVKKREEVLAKLQQYEEESAKITQLLQDESVVANLRSDKVANLKFLEEQHGVTVEMVNSLYDYGRFQYSCGSYGNAAELLYQFRVLSTDNDKVASATWGKFASEILTTSWEAAMEEVQKVKDSIETRLFNNPLGQLQNRSWLIHWSLFPFFNHDPARDVLTDLFFSPAYINTIQTNCPWILRYLAAAVITNRNRAHKNSSVYQKQLKDLIRVVRQEGYEYNDPITDFIKALYVDFDFEEAQKKLGEAEEVLRSDFFLVSTTDAFVEAARHLISESYCKIHQRIDIKDLSTRLGLNQDEGEKWIVNLIRDTRVDAKIDYKEGTVIMNHPPQSVYQQVIEKTKGAFFRTQVLSAAVAK</sequence>
<organism>
    <name type="scientific">Aspergillus fumigatus (strain CBS 144.89 / FGSC A1163 / CEA10)</name>
    <name type="common">Neosartorya fumigata</name>
    <dbReference type="NCBI Taxonomy" id="451804"/>
    <lineage>
        <taxon>Eukaryota</taxon>
        <taxon>Fungi</taxon>
        <taxon>Dikarya</taxon>
        <taxon>Ascomycota</taxon>
        <taxon>Pezizomycotina</taxon>
        <taxon>Eurotiomycetes</taxon>
        <taxon>Eurotiomycetidae</taxon>
        <taxon>Eurotiales</taxon>
        <taxon>Aspergillaceae</taxon>
        <taxon>Aspergillus</taxon>
        <taxon>Aspergillus subgen. Fumigati</taxon>
    </lineage>
</organism>
<gene>
    <name type="primary">int6</name>
    <name type="ORF">AFUB_037810</name>
</gene>
<dbReference type="EMBL" id="DS499596">
    <property type="protein sequence ID" value="EDP52615.1"/>
    <property type="molecule type" value="Genomic_DNA"/>
</dbReference>
<dbReference type="SMR" id="B0XXL3"/>
<dbReference type="EnsemblFungi" id="EDP52615">
    <property type="protein sequence ID" value="EDP52615"/>
    <property type="gene ID" value="AFUB_037810"/>
</dbReference>
<dbReference type="VEuPathDB" id="FungiDB:AFUB_037810"/>
<dbReference type="HOGENOM" id="CLU_031132_0_0_1"/>
<dbReference type="OrthoDB" id="11476at5052"/>
<dbReference type="PhylomeDB" id="B0XXL3"/>
<dbReference type="Proteomes" id="UP000001699">
    <property type="component" value="Unassembled WGS sequence"/>
</dbReference>
<dbReference type="GO" id="GO:0016282">
    <property type="term" value="C:eukaryotic 43S preinitiation complex"/>
    <property type="evidence" value="ECO:0007669"/>
    <property type="project" value="UniProtKB-UniRule"/>
</dbReference>
<dbReference type="GO" id="GO:0033290">
    <property type="term" value="C:eukaryotic 48S preinitiation complex"/>
    <property type="evidence" value="ECO:0007669"/>
    <property type="project" value="UniProtKB-UniRule"/>
</dbReference>
<dbReference type="GO" id="GO:0071540">
    <property type="term" value="C:eukaryotic translation initiation factor 3 complex, eIF3e"/>
    <property type="evidence" value="ECO:0007669"/>
    <property type="project" value="UniProtKB-UniRule"/>
</dbReference>
<dbReference type="GO" id="GO:0003743">
    <property type="term" value="F:translation initiation factor activity"/>
    <property type="evidence" value="ECO:0007669"/>
    <property type="project" value="UniProtKB-UniRule"/>
</dbReference>
<dbReference type="GO" id="GO:0001732">
    <property type="term" value="P:formation of cytoplasmic translation initiation complex"/>
    <property type="evidence" value="ECO:0007669"/>
    <property type="project" value="UniProtKB-UniRule"/>
</dbReference>
<dbReference type="CDD" id="cd21378">
    <property type="entry name" value="eIF3E"/>
    <property type="match status" value="1"/>
</dbReference>
<dbReference type="Gene3D" id="1.25.40.570">
    <property type="match status" value="1"/>
</dbReference>
<dbReference type="HAMAP" id="MF_03004">
    <property type="entry name" value="eIF3e"/>
    <property type="match status" value="1"/>
</dbReference>
<dbReference type="InterPro" id="IPR016650">
    <property type="entry name" value="eIF3e"/>
</dbReference>
<dbReference type="InterPro" id="IPR019010">
    <property type="entry name" value="eIF3e_N"/>
</dbReference>
<dbReference type="InterPro" id="IPR000717">
    <property type="entry name" value="PCI_dom"/>
</dbReference>
<dbReference type="InterPro" id="IPR036390">
    <property type="entry name" value="WH_DNA-bd_sf"/>
</dbReference>
<dbReference type="PANTHER" id="PTHR10317">
    <property type="entry name" value="EUKARYOTIC TRANSLATION INITIATION FACTOR 3 SUBUNIT E"/>
    <property type="match status" value="1"/>
</dbReference>
<dbReference type="Pfam" id="PF09440">
    <property type="entry name" value="eIF3_N"/>
    <property type="match status" value="1"/>
</dbReference>
<dbReference type="Pfam" id="PF21357">
    <property type="entry name" value="EIF3E_C"/>
    <property type="match status" value="1"/>
</dbReference>
<dbReference type="Pfam" id="PF01399">
    <property type="entry name" value="PCI"/>
    <property type="match status" value="1"/>
</dbReference>
<dbReference type="PIRSF" id="PIRSF016255">
    <property type="entry name" value="eIF3e_su6"/>
    <property type="match status" value="1"/>
</dbReference>
<dbReference type="SMART" id="SM01186">
    <property type="entry name" value="eIF3_N"/>
    <property type="match status" value="1"/>
</dbReference>
<dbReference type="SMART" id="SM00088">
    <property type="entry name" value="PINT"/>
    <property type="match status" value="1"/>
</dbReference>
<dbReference type="SUPFAM" id="SSF46785">
    <property type="entry name" value="Winged helix' DNA-binding domain"/>
    <property type="match status" value="1"/>
</dbReference>
<dbReference type="PROSITE" id="PS50250">
    <property type="entry name" value="PCI"/>
    <property type="match status" value="1"/>
</dbReference>
<evidence type="ECO:0000255" key="1">
    <source>
        <dbReference type="HAMAP-Rule" id="MF_03004"/>
    </source>
</evidence>
<evidence type="ECO:0000255" key="2">
    <source>
        <dbReference type="PROSITE-ProRule" id="PRU01185"/>
    </source>
</evidence>
<comment type="function">
    <text evidence="1">Component of the eukaryotic translation initiation factor 3 (eIF-3) complex, which is involved in protein synthesis of a specialized repertoire of mRNAs and, together with other initiation factors, stimulates binding of mRNA and methionyl-tRNAi to the 40S ribosome. The eIF-3 complex specifically targets and initiates translation of a subset of mRNAs involved in cell proliferation.</text>
</comment>
<comment type="subunit">
    <text evidence="1">Component of the eukaryotic translation initiation factor 3 (eIF-3) complex.</text>
</comment>
<comment type="subcellular location">
    <subcellularLocation>
        <location evidence="1">Cytoplasm</location>
    </subcellularLocation>
</comment>
<comment type="similarity">
    <text evidence="1">Belongs to the eIF-3 subunit E family.</text>
</comment>
<keyword id="KW-0963">Cytoplasm</keyword>
<keyword id="KW-0396">Initiation factor</keyword>
<keyword id="KW-0648">Protein biosynthesis</keyword>
<accession>B0XXL3</accession>
<feature type="chain" id="PRO_0000365980" description="Eukaryotic translation initiation factor 3 subunit E">
    <location>
        <begin position="1"/>
        <end position="451"/>
    </location>
</feature>
<feature type="domain" description="PCI" evidence="2">
    <location>
        <begin position="256"/>
        <end position="425"/>
    </location>
</feature>
<proteinExistence type="inferred from homology"/>
<reference key="1">
    <citation type="journal article" date="2008" name="PLoS Genet.">
        <title>Genomic islands in the pathogenic filamentous fungus Aspergillus fumigatus.</title>
        <authorList>
            <person name="Fedorova N.D."/>
            <person name="Khaldi N."/>
            <person name="Joardar V.S."/>
            <person name="Maiti R."/>
            <person name="Amedeo P."/>
            <person name="Anderson M.J."/>
            <person name="Crabtree J."/>
            <person name="Silva J.C."/>
            <person name="Badger J.H."/>
            <person name="Albarraq A."/>
            <person name="Angiuoli S."/>
            <person name="Bussey H."/>
            <person name="Bowyer P."/>
            <person name="Cotty P.J."/>
            <person name="Dyer P.S."/>
            <person name="Egan A."/>
            <person name="Galens K."/>
            <person name="Fraser-Liggett C.M."/>
            <person name="Haas B.J."/>
            <person name="Inman J.M."/>
            <person name="Kent R."/>
            <person name="Lemieux S."/>
            <person name="Malavazi I."/>
            <person name="Orvis J."/>
            <person name="Roemer T."/>
            <person name="Ronning C.M."/>
            <person name="Sundaram J.P."/>
            <person name="Sutton G."/>
            <person name="Turner G."/>
            <person name="Venter J.C."/>
            <person name="White O.R."/>
            <person name="Whitty B.R."/>
            <person name="Youngman P."/>
            <person name="Wolfe K.H."/>
            <person name="Goldman G.H."/>
            <person name="Wortman J.R."/>
            <person name="Jiang B."/>
            <person name="Denning D.W."/>
            <person name="Nierman W.C."/>
        </authorList>
    </citation>
    <scope>NUCLEOTIDE SEQUENCE [LARGE SCALE GENOMIC DNA]</scope>
    <source>
        <strain>CBS 144.89 / FGSC A1163 / CEA10</strain>
    </source>
</reference>
<protein>
    <recommendedName>
        <fullName evidence="1">Eukaryotic translation initiation factor 3 subunit E</fullName>
        <shortName evidence="1">eIF3e</shortName>
    </recommendedName>
</protein>